<evidence type="ECO:0000255" key="1">
    <source>
        <dbReference type="HAMAP-Rule" id="MF_01365"/>
    </source>
</evidence>
<evidence type="ECO:0000305" key="2"/>
<sequence>MIKWTEQAEIKLPDDVQATMENNELKIKGKLGEASRIFRDNYVKAYIEGSSVKIATSKNNKYTKGIVGTWYSETKLLIEGVTKGFEYHMKIDFTHFPMRVSVRGDKLIVENFLGEKSPRSAKIVDGCKVSVKGDRITINGIDKRKIGETAANIERATYIRHFDARVFQDGIFLLKGEVNE</sequence>
<gene>
    <name evidence="1" type="primary">rpl6</name>
    <name type="ordered locus">PTO0656</name>
</gene>
<proteinExistence type="inferred from homology"/>
<protein>
    <recommendedName>
        <fullName evidence="1">Large ribosomal subunit protein uL6</fullName>
    </recommendedName>
    <alternativeName>
        <fullName evidence="2">50S ribosomal protein L6</fullName>
    </alternativeName>
</protein>
<dbReference type="EMBL" id="AE017261">
    <property type="protein sequence ID" value="AAT43241.1"/>
    <property type="molecule type" value="Genomic_DNA"/>
</dbReference>
<dbReference type="RefSeq" id="WP_011177457.1">
    <property type="nucleotide sequence ID" value="NC_005877.1"/>
</dbReference>
<dbReference type="SMR" id="Q6L1B1"/>
<dbReference type="FunCoup" id="Q6L1B1">
    <property type="interactions" value="158"/>
</dbReference>
<dbReference type="STRING" id="263820.PTO0656"/>
<dbReference type="PaxDb" id="263820-PTO0656"/>
<dbReference type="GeneID" id="2844283"/>
<dbReference type="KEGG" id="pto:PTO0656"/>
<dbReference type="PATRIC" id="fig|263820.9.peg.689"/>
<dbReference type="eggNOG" id="arCOG04090">
    <property type="taxonomic scope" value="Archaea"/>
</dbReference>
<dbReference type="HOGENOM" id="CLU_065464_0_0_2"/>
<dbReference type="InParanoid" id="Q6L1B1"/>
<dbReference type="OrthoDB" id="7144at2157"/>
<dbReference type="Proteomes" id="UP000000438">
    <property type="component" value="Chromosome"/>
</dbReference>
<dbReference type="GO" id="GO:0022625">
    <property type="term" value="C:cytosolic large ribosomal subunit"/>
    <property type="evidence" value="ECO:0007669"/>
    <property type="project" value="TreeGrafter"/>
</dbReference>
<dbReference type="GO" id="GO:0019843">
    <property type="term" value="F:rRNA binding"/>
    <property type="evidence" value="ECO:0007669"/>
    <property type="project" value="UniProtKB-UniRule"/>
</dbReference>
<dbReference type="GO" id="GO:0003735">
    <property type="term" value="F:structural constituent of ribosome"/>
    <property type="evidence" value="ECO:0007669"/>
    <property type="project" value="InterPro"/>
</dbReference>
<dbReference type="GO" id="GO:0002181">
    <property type="term" value="P:cytoplasmic translation"/>
    <property type="evidence" value="ECO:0007669"/>
    <property type="project" value="TreeGrafter"/>
</dbReference>
<dbReference type="FunFam" id="3.90.930.12:FF:000008">
    <property type="entry name" value="50S ribosomal protein L6"/>
    <property type="match status" value="1"/>
</dbReference>
<dbReference type="Gene3D" id="3.90.930.12">
    <property type="entry name" value="Ribosomal protein L6, alpha-beta domain"/>
    <property type="match status" value="2"/>
</dbReference>
<dbReference type="HAMAP" id="MF_01365_A">
    <property type="entry name" value="Ribosomal_uL6_A"/>
    <property type="match status" value="1"/>
</dbReference>
<dbReference type="InterPro" id="IPR000702">
    <property type="entry name" value="Ribosomal_uL6-like"/>
</dbReference>
<dbReference type="InterPro" id="IPR036789">
    <property type="entry name" value="Ribosomal_uL6-like_a/b-dom_sf"/>
</dbReference>
<dbReference type="InterPro" id="IPR020040">
    <property type="entry name" value="Ribosomal_uL6_a/b-dom"/>
</dbReference>
<dbReference type="InterPro" id="IPR019907">
    <property type="entry name" value="Ribosomal_uL6_arc"/>
</dbReference>
<dbReference type="NCBIfam" id="NF004037">
    <property type="entry name" value="PRK05518.1"/>
    <property type="match status" value="1"/>
</dbReference>
<dbReference type="NCBIfam" id="TIGR03653">
    <property type="entry name" value="uL6_arch"/>
    <property type="match status" value="1"/>
</dbReference>
<dbReference type="PANTHER" id="PTHR11655:SF16">
    <property type="entry name" value="60S RIBOSOMAL PROTEIN L9"/>
    <property type="match status" value="1"/>
</dbReference>
<dbReference type="PANTHER" id="PTHR11655">
    <property type="entry name" value="60S/50S RIBOSOMAL PROTEIN L6/L9"/>
    <property type="match status" value="1"/>
</dbReference>
<dbReference type="Pfam" id="PF00347">
    <property type="entry name" value="Ribosomal_L6"/>
    <property type="match status" value="1"/>
</dbReference>
<dbReference type="PIRSF" id="PIRSF002162">
    <property type="entry name" value="Ribosomal_L6"/>
    <property type="match status" value="1"/>
</dbReference>
<dbReference type="SUPFAM" id="SSF56053">
    <property type="entry name" value="Ribosomal protein L6"/>
    <property type="match status" value="2"/>
</dbReference>
<organism>
    <name type="scientific">Picrophilus torridus (strain ATCC 700027 / DSM 9790 / JCM 10055 / NBRC 100828 / KAW 2/3)</name>
    <dbReference type="NCBI Taxonomy" id="1122961"/>
    <lineage>
        <taxon>Archaea</taxon>
        <taxon>Methanobacteriati</taxon>
        <taxon>Thermoplasmatota</taxon>
        <taxon>Thermoplasmata</taxon>
        <taxon>Thermoplasmatales</taxon>
        <taxon>Picrophilaceae</taxon>
        <taxon>Picrophilus</taxon>
    </lineage>
</organism>
<accession>Q6L1B1</accession>
<comment type="function">
    <text evidence="1">This protein binds to the 23S rRNA, and is important in its secondary structure. It is located near the subunit interface in the base of the L7/L12 stalk, and near the tRNA binding site of the peptidyltransferase center.</text>
</comment>
<comment type="subunit">
    <text evidence="1">Part of the 50S ribosomal subunit.</text>
</comment>
<comment type="similarity">
    <text evidence="1">Belongs to the universal ribosomal protein uL6 family.</text>
</comment>
<feature type="chain" id="PRO_0000260994" description="Large ribosomal subunit protein uL6">
    <location>
        <begin position="1"/>
        <end position="180"/>
    </location>
</feature>
<reference key="1">
    <citation type="journal article" date="2004" name="Proc. Natl. Acad. Sci. U.S.A.">
        <title>Genome sequence of Picrophilus torridus and its implications for life around pH 0.</title>
        <authorList>
            <person name="Fuetterer O."/>
            <person name="Angelov A."/>
            <person name="Liesegang H."/>
            <person name="Gottschalk G."/>
            <person name="Schleper C."/>
            <person name="Schepers B."/>
            <person name="Dock C."/>
            <person name="Antranikian G."/>
            <person name="Liebl W."/>
        </authorList>
    </citation>
    <scope>NUCLEOTIDE SEQUENCE [LARGE SCALE GENOMIC DNA]</scope>
    <source>
        <strain>ATCC 700027 / DSM 9790 / JCM 10055 / NBRC 100828 / KAW 2/3</strain>
    </source>
</reference>
<keyword id="KW-0687">Ribonucleoprotein</keyword>
<keyword id="KW-0689">Ribosomal protein</keyword>
<keyword id="KW-0694">RNA-binding</keyword>
<keyword id="KW-0699">rRNA-binding</keyword>
<name>RL6_PICTO</name>